<sequence length="173" mass="19516">MSKWLNVGKIVNTHGVRGEVRVLSTTDFEDDRFSSGKTLYVMRPNQNERVAVTVASHRKHKNFDLLCFEGYPSINDVEAFKGGRLQVPIEDRPELGEGEFFYHEIIGCSVVTIAGEELGKVKEILSPGANDVWVVQCRRGGKDLLIPYIEQVVKQVDLEKQQITIEPMEGLLE</sequence>
<gene>
    <name evidence="1" type="primary">rimM</name>
    <name type="ordered locus">BH2480</name>
</gene>
<evidence type="ECO:0000255" key="1">
    <source>
        <dbReference type="HAMAP-Rule" id="MF_00014"/>
    </source>
</evidence>
<accession>Q9KA14</accession>
<dbReference type="EMBL" id="BA000004">
    <property type="protein sequence ID" value="BAB06199.1"/>
    <property type="molecule type" value="Genomic_DNA"/>
</dbReference>
<dbReference type="PIR" id="H83959">
    <property type="entry name" value="H83959"/>
</dbReference>
<dbReference type="RefSeq" id="WP_010898631.1">
    <property type="nucleotide sequence ID" value="NC_002570.2"/>
</dbReference>
<dbReference type="SMR" id="Q9KA14"/>
<dbReference type="STRING" id="272558.gene:10728378"/>
<dbReference type="KEGG" id="bha:BH2480"/>
<dbReference type="eggNOG" id="COG0806">
    <property type="taxonomic scope" value="Bacteria"/>
</dbReference>
<dbReference type="HOGENOM" id="CLU_077636_3_1_9"/>
<dbReference type="OrthoDB" id="9810331at2"/>
<dbReference type="Proteomes" id="UP000001258">
    <property type="component" value="Chromosome"/>
</dbReference>
<dbReference type="GO" id="GO:0005737">
    <property type="term" value="C:cytoplasm"/>
    <property type="evidence" value="ECO:0007669"/>
    <property type="project" value="UniProtKB-SubCell"/>
</dbReference>
<dbReference type="GO" id="GO:0005840">
    <property type="term" value="C:ribosome"/>
    <property type="evidence" value="ECO:0007669"/>
    <property type="project" value="InterPro"/>
</dbReference>
<dbReference type="GO" id="GO:0043022">
    <property type="term" value="F:ribosome binding"/>
    <property type="evidence" value="ECO:0007669"/>
    <property type="project" value="InterPro"/>
</dbReference>
<dbReference type="GO" id="GO:0042274">
    <property type="term" value="P:ribosomal small subunit biogenesis"/>
    <property type="evidence" value="ECO:0007669"/>
    <property type="project" value="UniProtKB-UniRule"/>
</dbReference>
<dbReference type="GO" id="GO:0006364">
    <property type="term" value="P:rRNA processing"/>
    <property type="evidence" value="ECO:0007669"/>
    <property type="project" value="UniProtKB-UniRule"/>
</dbReference>
<dbReference type="Gene3D" id="2.30.30.240">
    <property type="entry name" value="PRC-barrel domain"/>
    <property type="match status" value="1"/>
</dbReference>
<dbReference type="Gene3D" id="2.40.30.60">
    <property type="entry name" value="RimM"/>
    <property type="match status" value="1"/>
</dbReference>
<dbReference type="HAMAP" id="MF_00014">
    <property type="entry name" value="Ribosome_mat_RimM"/>
    <property type="match status" value="1"/>
</dbReference>
<dbReference type="InterPro" id="IPR027275">
    <property type="entry name" value="PRC-brl_dom"/>
</dbReference>
<dbReference type="InterPro" id="IPR011033">
    <property type="entry name" value="PRC_barrel-like_sf"/>
</dbReference>
<dbReference type="InterPro" id="IPR011961">
    <property type="entry name" value="RimM"/>
</dbReference>
<dbReference type="InterPro" id="IPR002676">
    <property type="entry name" value="RimM_N"/>
</dbReference>
<dbReference type="InterPro" id="IPR036976">
    <property type="entry name" value="RimM_N_sf"/>
</dbReference>
<dbReference type="InterPro" id="IPR009000">
    <property type="entry name" value="Transl_B-barrel_sf"/>
</dbReference>
<dbReference type="NCBIfam" id="TIGR02273">
    <property type="entry name" value="16S_RimM"/>
    <property type="match status" value="1"/>
</dbReference>
<dbReference type="PANTHER" id="PTHR33692">
    <property type="entry name" value="RIBOSOME MATURATION FACTOR RIMM"/>
    <property type="match status" value="1"/>
</dbReference>
<dbReference type="PANTHER" id="PTHR33692:SF1">
    <property type="entry name" value="RIBOSOME MATURATION FACTOR RIMM"/>
    <property type="match status" value="1"/>
</dbReference>
<dbReference type="Pfam" id="PF05239">
    <property type="entry name" value="PRC"/>
    <property type="match status" value="1"/>
</dbReference>
<dbReference type="Pfam" id="PF01782">
    <property type="entry name" value="RimM"/>
    <property type="match status" value="1"/>
</dbReference>
<dbReference type="SUPFAM" id="SSF50346">
    <property type="entry name" value="PRC-barrel domain"/>
    <property type="match status" value="1"/>
</dbReference>
<dbReference type="SUPFAM" id="SSF50447">
    <property type="entry name" value="Translation proteins"/>
    <property type="match status" value="1"/>
</dbReference>
<reference key="1">
    <citation type="journal article" date="2000" name="Nucleic Acids Res.">
        <title>Complete genome sequence of the alkaliphilic bacterium Bacillus halodurans and genomic sequence comparison with Bacillus subtilis.</title>
        <authorList>
            <person name="Takami H."/>
            <person name="Nakasone K."/>
            <person name="Takaki Y."/>
            <person name="Maeno G."/>
            <person name="Sasaki R."/>
            <person name="Masui N."/>
            <person name="Fuji F."/>
            <person name="Hirama C."/>
            <person name="Nakamura Y."/>
            <person name="Ogasawara N."/>
            <person name="Kuhara S."/>
            <person name="Horikoshi K."/>
        </authorList>
    </citation>
    <scope>NUCLEOTIDE SEQUENCE [LARGE SCALE GENOMIC DNA]</scope>
    <source>
        <strain>ATCC BAA-125 / DSM 18197 / FERM 7344 / JCM 9153 / C-125</strain>
    </source>
</reference>
<proteinExistence type="inferred from homology"/>
<protein>
    <recommendedName>
        <fullName evidence="1">Ribosome maturation factor RimM</fullName>
    </recommendedName>
</protein>
<comment type="function">
    <text evidence="1">An accessory protein needed during the final step in the assembly of 30S ribosomal subunit, possibly for assembly of the head region. Essential for efficient processing of 16S rRNA. May be needed both before and after RbfA during the maturation of 16S rRNA. It has affinity for free ribosomal 30S subunits but not for 70S ribosomes.</text>
</comment>
<comment type="subunit">
    <text evidence="1">Binds ribosomal protein uS19.</text>
</comment>
<comment type="subcellular location">
    <subcellularLocation>
        <location evidence="1">Cytoplasm</location>
    </subcellularLocation>
</comment>
<comment type="domain">
    <text evidence="1">The PRC barrel domain binds ribosomal protein uS19.</text>
</comment>
<comment type="similarity">
    <text evidence="1">Belongs to the RimM family.</text>
</comment>
<keyword id="KW-0143">Chaperone</keyword>
<keyword id="KW-0963">Cytoplasm</keyword>
<keyword id="KW-1185">Reference proteome</keyword>
<keyword id="KW-0690">Ribosome biogenesis</keyword>
<keyword id="KW-0698">rRNA processing</keyword>
<organism>
    <name type="scientific">Halalkalibacterium halodurans (strain ATCC BAA-125 / DSM 18197 / FERM 7344 / JCM 9153 / C-125)</name>
    <name type="common">Bacillus halodurans</name>
    <dbReference type="NCBI Taxonomy" id="272558"/>
    <lineage>
        <taxon>Bacteria</taxon>
        <taxon>Bacillati</taxon>
        <taxon>Bacillota</taxon>
        <taxon>Bacilli</taxon>
        <taxon>Bacillales</taxon>
        <taxon>Bacillaceae</taxon>
        <taxon>Halalkalibacterium (ex Joshi et al. 2022)</taxon>
    </lineage>
</organism>
<feature type="chain" id="PRO_0000163249" description="Ribosome maturation factor RimM">
    <location>
        <begin position="1"/>
        <end position="173"/>
    </location>
</feature>
<feature type="domain" description="PRC barrel" evidence="1">
    <location>
        <begin position="97"/>
        <end position="171"/>
    </location>
</feature>
<name>RIMM_HALH5</name>